<reference key="1">
    <citation type="journal article" date="2004" name="Nature">
        <title>The DNA sequence and biology of human chromosome 19.</title>
        <authorList>
            <person name="Grimwood J."/>
            <person name="Gordon L.A."/>
            <person name="Olsen A.S."/>
            <person name="Terry A."/>
            <person name="Schmutz J."/>
            <person name="Lamerdin J.E."/>
            <person name="Hellsten U."/>
            <person name="Goodstein D."/>
            <person name="Couronne O."/>
            <person name="Tran-Gyamfi M."/>
            <person name="Aerts A."/>
            <person name="Altherr M."/>
            <person name="Ashworth L."/>
            <person name="Bajorek E."/>
            <person name="Black S."/>
            <person name="Branscomb E."/>
            <person name="Caenepeel S."/>
            <person name="Carrano A.V."/>
            <person name="Caoile C."/>
            <person name="Chan Y.M."/>
            <person name="Christensen M."/>
            <person name="Cleland C.A."/>
            <person name="Copeland A."/>
            <person name="Dalin E."/>
            <person name="Dehal P."/>
            <person name="Denys M."/>
            <person name="Detter J.C."/>
            <person name="Escobar J."/>
            <person name="Flowers D."/>
            <person name="Fotopulos D."/>
            <person name="Garcia C."/>
            <person name="Georgescu A.M."/>
            <person name="Glavina T."/>
            <person name="Gomez M."/>
            <person name="Gonzales E."/>
            <person name="Groza M."/>
            <person name="Hammon N."/>
            <person name="Hawkins T."/>
            <person name="Haydu L."/>
            <person name="Ho I."/>
            <person name="Huang W."/>
            <person name="Israni S."/>
            <person name="Jett J."/>
            <person name="Kadner K."/>
            <person name="Kimball H."/>
            <person name="Kobayashi A."/>
            <person name="Larionov V."/>
            <person name="Leem S.-H."/>
            <person name="Lopez F."/>
            <person name="Lou Y."/>
            <person name="Lowry S."/>
            <person name="Malfatti S."/>
            <person name="Martinez D."/>
            <person name="McCready P.M."/>
            <person name="Medina C."/>
            <person name="Morgan J."/>
            <person name="Nelson K."/>
            <person name="Nolan M."/>
            <person name="Ovcharenko I."/>
            <person name="Pitluck S."/>
            <person name="Pollard M."/>
            <person name="Popkie A.P."/>
            <person name="Predki P."/>
            <person name="Quan G."/>
            <person name="Ramirez L."/>
            <person name="Rash S."/>
            <person name="Retterer J."/>
            <person name="Rodriguez A."/>
            <person name="Rogers S."/>
            <person name="Salamov A."/>
            <person name="Salazar A."/>
            <person name="She X."/>
            <person name="Smith D."/>
            <person name="Slezak T."/>
            <person name="Solovyev V."/>
            <person name="Thayer N."/>
            <person name="Tice H."/>
            <person name="Tsai M."/>
            <person name="Ustaszewska A."/>
            <person name="Vo N."/>
            <person name="Wagner M."/>
            <person name="Wheeler J."/>
            <person name="Wu K."/>
            <person name="Xie G."/>
            <person name="Yang J."/>
            <person name="Dubchak I."/>
            <person name="Furey T.S."/>
            <person name="DeJong P."/>
            <person name="Dickson M."/>
            <person name="Gordon D."/>
            <person name="Eichler E.E."/>
            <person name="Pennacchio L.A."/>
            <person name="Richardson P."/>
            <person name="Stubbs L."/>
            <person name="Rokhsar D.S."/>
            <person name="Myers R.M."/>
            <person name="Rubin E.M."/>
            <person name="Lucas S.M."/>
        </authorList>
    </citation>
    <scope>NUCLEOTIDE SEQUENCE [LARGE SCALE GENOMIC DNA]</scope>
</reference>
<reference key="2">
    <citation type="submission" date="2005-07" db="EMBL/GenBank/DDBJ databases">
        <authorList>
            <person name="Mural R.J."/>
            <person name="Istrail S."/>
            <person name="Sutton G.G."/>
            <person name="Florea L."/>
            <person name="Halpern A.L."/>
            <person name="Mobarry C.M."/>
            <person name="Lippert R."/>
            <person name="Walenz B."/>
            <person name="Shatkay H."/>
            <person name="Dew I."/>
            <person name="Miller J.R."/>
            <person name="Flanigan M.J."/>
            <person name="Edwards N.J."/>
            <person name="Bolanos R."/>
            <person name="Fasulo D."/>
            <person name="Halldorsson B.V."/>
            <person name="Hannenhalli S."/>
            <person name="Turner R."/>
            <person name="Yooseph S."/>
            <person name="Lu F."/>
            <person name="Nusskern D.R."/>
            <person name="Shue B.C."/>
            <person name="Zheng X.H."/>
            <person name="Zhong F."/>
            <person name="Delcher A.L."/>
            <person name="Huson D.H."/>
            <person name="Kravitz S.A."/>
            <person name="Mouchard L."/>
            <person name="Reinert K."/>
            <person name="Remington K.A."/>
            <person name="Clark A.G."/>
            <person name="Waterman M.S."/>
            <person name="Eichler E.E."/>
            <person name="Adams M.D."/>
            <person name="Hunkapiller M.W."/>
            <person name="Myers E.W."/>
            <person name="Venter J.C."/>
        </authorList>
    </citation>
    <scope>NUCLEOTIDE SEQUENCE [LARGE SCALE GENOMIC DNA]</scope>
</reference>
<reference key="3">
    <citation type="journal article" date="2004" name="Genome Res.">
        <title>The status, quality, and expansion of the NIH full-length cDNA project: the Mammalian Gene Collection (MGC).</title>
        <authorList>
            <consortium name="The MGC Project Team"/>
        </authorList>
    </citation>
    <scope>NUCLEOTIDE SEQUENCE [MRNA] (ISOFORM 3)</scope>
    <scope>NUCLEOTIDE SEQUENCE [MRNA] OF 194-608 (ISOFORM 1)</scope>
    <source>
        <tissue>Skin</tissue>
    </source>
</reference>
<reference key="4">
    <citation type="journal article" date="2007" name="BMC Genomics">
        <title>The full-ORF clone resource of the German cDNA consortium.</title>
        <authorList>
            <person name="Bechtel S."/>
            <person name="Rosenfelder H."/>
            <person name="Duda A."/>
            <person name="Schmidt C.P."/>
            <person name="Ernst U."/>
            <person name="Wellenreuther R."/>
            <person name="Mehrle A."/>
            <person name="Schuster C."/>
            <person name="Bahr A."/>
            <person name="Bloecker H."/>
            <person name="Heubner D."/>
            <person name="Hoerlein A."/>
            <person name="Michel G."/>
            <person name="Wedler H."/>
            <person name="Koehrer K."/>
            <person name="Ottenwaelder B."/>
            <person name="Poustka A."/>
            <person name="Wiemann S."/>
            <person name="Schupp I."/>
        </authorList>
    </citation>
    <scope>NUCLEOTIDE SEQUENCE [LARGE SCALE MRNA] OF 43-608 (ISOFORM 2)</scope>
    <source>
        <tissue>Amygdala</tissue>
    </source>
</reference>
<reference key="5">
    <citation type="journal article" date="2002" name="J. Biol. Chem.">
        <title>Lipopolysaccharide-induced methylation of HuR, an mRNA-stabilizing protein, by CARM1. Coactivator-associated arginine methyltransferase.</title>
        <authorList>
            <person name="Li H."/>
            <person name="Park S."/>
            <person name="Kilburn B."/>
            <person name="Jelinek M.A."/>
            <person name="Henschen-Edman A."/>
            <person name="Aswad D.W."/>
            <person name="Stallcup M.R."/>
            <person name="Laird-Offringa I.A."/>
        </authorList>
    </citation>
    <scope>FUNCTION IN METHYLATION OF ELAVL1</scope>
</reference>
<reference key="6">
    <citation type="journal article" date="2004" name="Cancer">
        <title>Aberrant expression of CARM1, a transcriptional coactivator of androgen receptor, in the development of prostate carcinoma and androgen-independent status.</title>
        <authorList>
            <person name="Hong H."/>
            <person name="Kao C."/>
            <person name="Jeng M.-H."/>
            <person name="Eble J.N."/>
            <person name="Koch M.O."/>
            <person name="Gardner T.A."/>
            <person name="Zhang S."/>
            <person name="Li L."/>
            <person name="Pan C.-X."/>
            <person name="Hu Z."/>
            <person name="MacLennan G.T."/>
            <person name="Cheng L."/>
        </authorList>
    </citation>
    <scope>TISSUE SPECIFICITY</scope>
    <scope>SUBCELLULAR LOCATION</scope>
</reference>
<reference key="7">
    <citation type="journal article" date="2004" name="J. Biol. Chem.">
        <title>Ligand-dependent activation of the farnesoid X-receptor directs arginine methylation of histone H3 by CARM1.</title>
        <authorList>
            <person name="Ananthanarayanan M."/>
            <person name="Li S."/>
            <person name="Balasubramaniyan N."/>
            <person name="Suchy F.J."/>
            <person name="Walsh M.J."/>
        </authorList>
    </citation>
    <scope>INTERACTION WITH NR1H4</scope>
</reference>
<reference key="8">
    <citation type="journal article" date="2005" name="Proc. Natl. Acad. Sci. U.S.A.">
        <title>Regulation of coactivator complex assembly and function by protein arginine methylation and demethylimination.</title>
        <authorList>
            <person name="Lee Y.-H."/>
            <person name="Coonrod S.A."/>
            <person name="Kraus W.L."/>
            <person name="Jelinek M.A."/>
            <person name="Stallcup M.R."/>
        </authorList>
    </citation>
    <scope>FUNCTION IN METHYLATION OF EP300</scope>
</reference>
<reference key="9">
    <citation type="journal article" date="2006" name="J. Virol.">
        <title>Coactivator-associated arginine methyltransferase 1 enhances transcriptional activity of the human T-cell lymphotropic virus type 1 long terminal repeat through direct interaction with Tax.</title>
        <authorList>
            <person name="Jeong S.J."/>
            <person name="Lu H."/>
            <person name="Cho W.K."/>
            <person name="Park H.U."/>
            <person name="Pise-Masison C."/>
            <person name="Brady J.N."/>
        </authorList>
    </citation>
    <scope>INTERACTION WITH HTLV-1 TAX (MICROBIAL INFECTION)</scope>
</reference>
<reference key="10">
    <citation type="journal article" date="2006" name="Mol. Endocrinol.">
        <title>Coactivator-associated arginine methyltransferase-1 enhances nuclear factor-kappaB-mediated gene transcription through methylation of histone H3 at arginine 17.</title>
        <authorList>
            <person name="Miao F."/>
            <person name="Li S."/>
            <person name="Chavez V."/>
            <person name="Lanting L."/>
            <person name="Natarajan R."/>
        </authorList>
    </citation>
    <scope>FUNCTION IN METHYLATION OF HISTONE H3</scope>
    <scope>INTERACTION WITH RELA</scope>
    <scope>FUNCTION</scope>
</reference>
<reference key="11">
    <citation type="journal article" date="2009" name="Anal. Chem.">
        <title>Lys-N and trypsin cover complementary parts of the phosphoproteome in a refined SCX-based approach.</title>
        <authorList>
            <person name="Gauci S."/>
            <person name="Helbig A.O."/>
            <person name="Slijper M."/>
            <person name="Krijgsveld J."/>
            <person name="Heck A.J."/>
            <person name="Mohammed S."/>
        </authorList>
    </citation>
    <scope>ACETYLATION [LARGE SCALE ANALYSIS] AT ALA-2</scope>
    <scope>CLEAVAGE OF INITIATOR METHIONINE [LARGE SCALE ANALYSIS]</scope>
    <scope>IDENTIFICATION BY MASS SPECTROMETRY [LARGE SCALE ANALYSIS]</scope>
</reference>
<reference key="12">
    <citation type="journal article" date="2009" name="Biochem. J.">
        <title>Kinetic analysis of human protein arginine N-methyltransferase 2: formation of monomethyl- and asymmetric dimethyl-arginine residues on histone H4.</title>
        <authorList>
            <person name="Lakowski T.M."/>
            <person name="Frankel A."/>
        </authorList>
    </citation>
    <scope>FUNCTION</scope>
    <scope>CATALYTIC ACTIVITY</scope>
</reference>
<reference key="13">
    <citation type="journal article" date="2009" name="J. Biol. Chem.">
        <title>Biochemical control of CARM1 enzymatic activity by phosphorylation.</title>
        <authorList>
            <person name="Feng Q."/>
            <person name="He B."/>
            <person name="Jung S.Y."/>
            <person name="Song Y."/>
            <person name="Qin J."/>
            <person name="Tsai S.Y."/>
            <person name="Tsai M.J."/>
            <person name="O'Malley B.W."/>
        </authorList>
    </citation>
    <scope>PHOSPHORYLATION AT SER-216</scope>
    <scope>SUBCELLULAR LOCATION</scope>
    <scope>IDENTIFICATION BY MASS SPECTROMETRY</scope>
</reference>
<reference key="14">
    <citation type="journal article" date="2011" name="BMC Syst. Biol.">
        <title>Initial characterization of the human central proteome.</title>
        <authorList>
            <person name="Burkard T.R."/>
            <person name="Planyavsky M."/>
            <person name="Kaupe I."/>
            <person name="Breitwieser F.P."/>
            <person name="Buerckstuemmer T."/>
            <person name="Bennett K.L."/>
            <person name="Superti-Furga G."/>
            <person name="Colinge J."/>
        </authorList>
    </citation>
    <scope>IDENTIFICATION BY MASS SPECTROMETRY [LARGE SCALE ANALYSIS]</scope>
</reference>
<reference key="15">
    <citation type="journal article" date="2012" name="Mol. Cell. Proteomics">
        <title>Comparative large-scale characterisation of plant vs. mammal proteins reveals similar and idiosyncratic N-alpha acetylation features.</title>
        <authorList>
            <person name="Bienvenut W.V."/>
            <person name="Sumpton D."/>
            <person name="Martinez A."/>
            <person name="Lilla S."/>
            <person name="Espagne C."/>
            <person name="Meinnel T."/>
            <person name="Giglione C."/>
        </authorList>
    </citation>
    <scope>ACETYLATION [LARGE SCALE ANALYSIS] AT ALA-2</scope>
    <scope>CLEAVAGE OF INITIATOR METHIONINE [LARGE SCALE ANALYSIS]</scope>
    <scope>IDENTIFICATION BY MASS SPECTROMETRY [LARGE SCALE ANALYSIS]</scope>
</reference>
<reference key="16">
    <citation type="journal article" date="2021" name="Mol. Cell">
        <title>CARM1 regulates replication fork speed and stress response by stimulating PARP1.</title>
        <authorList>
            <person name="Genois M.M."/>
            <person name="Gagne J.P."/>
            <person name="Yasuhara T."/>
            <person name="Jackson J."/>
            <person name="Saxena S."/>
            <person name="Langelier M.F."/>
            <person name="Ahel I."/>
            <person name="Bedford M.T."/>
            <person name="Pascal J.M."/>
            <person name="Vindigni A."/>
            <person name="Poirier G.G."/>
            <person name="Zou L."/>
        </authorList>
    </citation>
    <scope>FUNCTION</scope>
    <scope>SUBCELLULAR LOCATION</scope>
    <scope>INTERACTION WITH PARP1</scope>
    <scope>MUTAGENESIS OF ARG-168</scope>
</reference>
<reference key="17">
    <citation type="journal article" date="2021" name="Cell Death Dis.">
        <title>Endotoxin stabilizes protein arginine methyltransferase 4 (PRMT4) protein triggering death of lung epithelia.</title>
        <authorList>
            <person name="Lai Y."/>
            <person name="Li X."/>
            <person name="Li T."/>
            <person name="Nyunoya T."/>
            <person name="Chen K."/>
            <person name="Kitsios G.D."/>
            <person name="Nouraie S.M."/>
            <person name="Zhang Y."/>
            <person name="McVerry B.J."/>
            <person name="Lee J.S."/>
            <person name="Mallampalli R.K."/>
            <person name="Zou C."/>
        </authorList>
    </citation>
    <scope>UBIQUITINATION AT LYS-227</scope>
    <scope>MUTAGENESIS OF LYS-227</scope>
</reference>
<reference key="18">
    <citation type="journal article" date="2011" name="Biochem. J.">
        <title>Structural basis for CARM1 inhibition by indole and pyrazole inhibitors.</title>
        <authorList>
            <person name="Sack J.S."/>
            <person name="Thieffine S."/>
            <person name="Bandiera T."/>
            <person name="Fasolini M."/>
            <person name="Duke G.J."/>
            <person name="Jayaraman L."/>
            <person name="Kish K.F."/>
            <person name="Klei H.E."/>
            <person name="Purandare A.V."/>
            <person name="Rosettani P."/>
            <person name="Troiani S."/>
            <person name="Xie D."/>
            <person name="Bertrand J.A."/>
        </authorList>
    </citation>
    <scope>X-RAY CRYSTALLOGRAPHY (2.1 ANGSTROMS) OF 135-482 IN COMPLEX WITH SAM ANALOG AND INHIBITORS</scope>
    <scope>SAM BINDING SITES</scope>
</reference>
<keyword id="KW-0002">3D-structure</keyword>
<keyword id="KW-0007">Acetylation</keyword>
<keyword id="KW-0025">Alternative splicing</keyword>
<keyword id="KW-0156">Chromatin regulator</keyword>
<keyword id="KW-0158">Chromosome</keyword>
<keyword id="KW-0963">Cytoplasm</keyword>
<keyword id="KW-0945">Host-virus interaction</keyword>
<keyword id="KW-1017">Isopeptide bond</keyword>
<keyword id="KW-0488">Methylation</keyword>
<keyword id="KW-0489">Methyltransferase</keyword>
<keyword id="KW-0539">Nucleus</keyword>
<keyword id="KW-0597">Phosphoprotein</keyword>
<keyword id="KW-1267">Proteomics identification</keyword>
<keyword id="KW-1185">Reference proteome</keyword>
<keyword id="KW-0949">S-adenosyl-L-methionine</keyword>
<keyword id="KW-0804">Transcription</keyword>
<keyword id="KW-0805">Transcription regulation</keyword>
<keyword id="KW-0808">Transferase</keyword>
<keyword id="KW-0832">Ubl conjugation</keyword>
<sequence length="608" mass="65854">MAAAAAAVGPGAGGAGSAVPGGAGPCATVSVFPGARLLTIGDANGEIQRHAEQQALRLEVRAGPDSAGIALYSHEDVCVFKCSVSRETECSRVGKQSFIITLGCNSVLIQFATPNDFCSFYNILKTCRGHTLERSVFSERTEESSAVQYFQFYGYLSQQQNMMQDYVRTGTYQRAILQNHTDFKDKIVLDVGCGSGILSFFAAQAGARKIYAVEASTMAQHAEVLVKSNNLTDRIVVIPGKVEEVSLPEQVDIIISEPMGYMLFNERMLESYLHAKKYLKPSGNMFPTIGDVHLAPFTDEQLYMEQFTKANFWYQPSFHGVDLSALRGAAVDEYFRQPVVDTFDIRILMAKSVKYTVNFLEAKEGDLHRIEIPFKFHMLHSGLVHGLAFWFDVAFIGSIMTVWLSTAPTEPLTHWYQVRCLFQSPLFAKAGDTLSGTCLLIANKRQSYDISIVAQVDQTGSKSSNLLDLKNPFFRYTGTTPSPPPGSHYTSPSENMWNTGSTYNLSSGMAVAGMPTAYDLSSVIASGSSVGHNNLIPLANTGIVNHTHSRMGSIMSTGIVQGSSGAQGSGGGSTSAHYAVNSQFTMGGPAISMASPMSIPTNTMHYGS</sequence>
<name>CARM1_HUMAN</name>
<comment type="function">
    <text evidence="2 4 7 8 10 12">Methylates (mono- and asymmetric dimethylation) the guanidino nitrogens of arginyl residues in several proteins involved in DNA packaging, transcription regulation, pre-mRNA splicing, and mRNA stability (PubMed:12237300, PubMed:16497732, PubMed:19405910). Recruited to promoters upon gene activation together with histone acetyltransferases from EP300/P300 and p160 families, methylates histone H3 at 'Arg-17' (H3R17me), forming mainly asymmetric dimethylarginine (H3R17me2a), leading to activation of transcription via chromatin remodeling (PubMed:12237300, PubMed:16497732, PubMed:19405910). During nuclear hormone receptor activation and TCF7L2/TCF4 activation, acts synergically with EP300/P300 and either one of the p160 histone acetyltransferases NCOA1/SRC1, NCOA2/GRIP1 and NCOA3/ACTR or CTNNB1/beta-catenin to activate transcription (By similarity). During myogenic transcriptional activation, acts together with NCOA3/ACTR as a coactivator for MEF2C (By similarity). During monocyte inflammatory stimulation, acts together with EP300/P300 as a coactivator for NF-kappa-B (By similarity). Acts as a coactivator for PPARG, promotes adipocyte differentiation and the accumulation of brown fat tissue (By similarity). Plays a role in the regulation of pre-mRNA alternative splicing by methylation of splicing factors (By similarity). Also seems to be involved in p53/TP53 transcriptional activation (By similarity). Methylates EP300/P300, both at 'Arg-2142', which may loosen its interaction with NCOA2/GRIP1, and at 'Arg-580' and 'Arg-604' in the KIX domain, which impairs its interaction with CREB and inhibits CREB-dependent transcriptional activation (PubMed:15731352). Also methylates arginine residues in RNA-binding proteins PABPC1, ELAVL1 and ELAV4, which may affect their mRNA-stabilizing properties and the half-life of their target mRNAs (By similarity). Acts as a transcriptional coactivator of ACACA/acetyl-CoA carboxylase by enriching H3R17 methylation at its promoter, thereby positively regulating fatty acid synthesis (By similarity). Independently of its methyltransferase activity, involved in replication fork progression: promotes PARP1 recruitment to replication forks, leading to poly-ADP-ribosylation of chromatin at replication forks and reduced fork speed (PubMed:33412112).</text>
</comment>
<comment type="catalytic activity">
    <reaction evidence="10">
        <text>L-arginyl-[protein] + 2 S-adenosyl-L-methionine = N(omega),N(omega)-dimethyl-L-arginyl-[protein] + 2 S-adenosyl-L-homocysteine + 2 H(+)</text>
        <dbReference type="Rhea" id="RHEA:48096"/>
        <dbReference type="Rhea" id="RHEA-COMP:10532"/>
        <dbReference type="Rhea" id="RHEA-COMP:11991"/>
        <dbReference type="ChEBI" id="CHEBI:15378"/>
        <dbReference type="ChEBI" id="CHEBI:29965"/>
        <dbReference type="ChEBI" id="CHEBI:57856"/>
        <dbReference type="ChEBI" id="CHEBI:59789"/>
        <dbReference type="ChEBI" id="CHEBI:61897"/>
        <dbReference type="EC" id="2.1.1.319"/>
    </reaction>
</comment>
<comment type="activity regulation">
    <text evidence="2">Methylation of H3R17 (H3R17me) by CARM1 is stimulated by preacetylation of H3 'Lys-18' (H3K18ac) H3 'Lys-23' (H3K23ac) by EP300 and blocked by citrullination of H3 'Arg-17' (H3R17ci) by PADI4.</text>
</comment>
<comment type="subunit">
    <text evidence="1 2 6 8 12">Homodimer (By similarity). Interacts with NR1H4 (PubMed:15471871). Interacts with SNRPC (By similarity). Interacts with the C-terminus of NCOA2/GRIP1, NCO3/ACTR and NCOA1/SRC1 (By similarity). Part of a complex consisting of CARM1, EP300/P300 and NCOA2/GRIP1 (By similarity). Interacts with FLII, TP53, myogenic factor MEF2, EP300/P300, TRIM24, CREBBP and CTNNB1 (By similarity). Interacts with RELA (PubMed:16497732). Identified in a complex containing CARM1, TRIM24 and NCOA2/GRIP1 (By similarity). Interacts with NCOA3/SRC3 (By similarity). Interacts with SKP2 (By similarity). Interacts (via PH domain-like fold) with C9orf72 (By similarity). Interacts with PARP1; promoting PARP1 recruimtent to replication forks (PubMed:33412112).</text>
</comment>
<comment type="subunit">
    <text evidence="9">(Microbial infection) Interacts with HTLV-1 protein Tax.</text>
</comment>
<comment type="interaction">
    <interactant intactId="EBI-2339854">
        <id>Q86X55</id>
    </interactant>
    <interactant intactId="EBI-709613">
        <id>P04075</id>
        <label>ALDOA</label>
    </interactant>
    <organismsDiffer>false</organismsDiffer>
    <experiments>2</experiments>
</comment>
<comment type="interaction">
    <interactant intactId="EBI-2339854">
        <id>Q86X55</id>
    </interactant>
    <interactant intactId="EBI-969696">
        <id>P17676</id>
        <label>CEBPB</label>
    </interactant>
    <organismsDiffer>false</organismsDiffer>
    <experiments>2</experiments>
</comment>
<comment type="interaction">
    <interactant intactId="EBI-2339854">
        <id>Q86X55</id>
    </interactant>
    <interactant intactId="EBI-356767">
        <id>Q96EY1</id>
        <label>DNAJA3</label>
    </interactant>
    <organismsDiffer>false</organismsDiffer>
    <experiments>2</experiments>
</comment>
<comment type="interaction">
    <interactant intactId="EBI-2339854">
        <id>Q86X55</id>
    </interactant>
    <interactant intactId="EBI-8464037">
        <id>Q6NYC1</id>
        <label>JMJD6</label>
    </interactant>
    <organismsDiffer>false</organismsDiffer>
    <experiments>2</experiments>
</comment>
<comment type="interaction">
    <interactant intactId="EBI-2339854">
        <id>Q86X55</id>
    </interactant>
    <interactant intactId="EBI-81196">
        <id>Q9Y6Q9</id>
        <label>NCOA3</label>
    </interactant>
    <organismsDiffer>false</organismsDiffer>
    <experiments>13</experiments>
</comment>
<comment type="interaction">
    <interactant intactId="EBI-2339854">
        <id>Q86X55</id>
    </interactant>
    <interactant intactId="EBI-355720">
        <id>O43809</id>
        <label>NUDT21</label>
    </interactant>
    <organismsDiffer>false</organismsDiffer>
    <experiments>2</experiments>
</comment>
<comment type="interaction">
    <interactant intactId="EBI-2339854">
        <id>Q86X55</id>
    </interactant>
    <interactant intactId="EBI-945792">
        <id>Q96PU8</id>
        <label>QKI</label>
    </interactant>
    <organismsDiffer>false</organismsDiffer>
    <experiments>2</experiments>
</comment>
<comment type="interaction">
    <interactant intactId="EBI-2339854">
        <id>Q86X55</id>
    </interactant>
    <interactant intactId="EBI-355653">
        <id>Q92922</id>
        <label>SMARCC1</label>
    </interactant>
    <organismsDiffer>false</organismsDiffer>
    <experiments>4</experiments>
</comment>
<comment type="interaction">
    <interactant intactId="EBI-2339854">
        <id>Q86X55</id>
    </interactant>
    <interactant intactId="EBI-474067">
        <id>P55854</id>
        <label>SUMO3</label>
    </interactant>
    <organismsDiffer>false</organismsDiffer>
    <experiments>2</experiments>
</comment>
<comment type="interaction">
    <interactant intactId="EBI-2339854">
        <id>Q86X55</id>
    </interactant>
    <interactant intactId="EBI-525995">
        <id>Q8IUC6</id>
        <label>TICAM1</label>
    </interactant>
    <organismsDiffer>false</organismsDiffer>
    <experiments>2</experiments>
</comment>
<comment type="interaction">
    <interactant intactId="EBI-2339854">
        <id>Q86X55</id>
    </interactant>
    <interactant intactId="EBI-7774198">
        <id>Q05826</id>
        <label>CEBPB</label>
    </interactant>
    <organismsDiffer>true</organismsDiffer>
    <experiments>3</experiments>
</comment>
<comment type="interaction">
    <interactant intactId="EBI-2339854">
        <id>Q86X55</id>
    </interactant>
    <interactant intactId="EBI-20592362">
        <id>A0A1U8QN96</id>
        <label>YPMT1.27c</label>
    </interactant>
    <organismsDiffer>true</organismsDiffer>
    <experiments>2</experiments>
</comment>
<comment type="subcellular location">
    <subcellularLocation>
        <location evidence="11">Nucleus</location>
    </subcellularLocation>
    <subcellularLocation>
        <location evidence="11">Cytoplasm</location>
    </subcellularLocation>
    <subcellularLocation>
        <location evidence="12">Chromosome</location>
    </subcellularLocation>
    <text evidence="11 12">Mainly nuclear during the G1, S and G2 phases of the cell cycle (PubMed:19843527). Cytoplasmic during mitosis, after breakup of the nuclear membrane (PubMed:19843527). Localizes to replication forks (PubMed:33412112).</text>
</comment>
<comment type="alternative products">
    <event type="alternative splicing"/>
    <isoform>
        <id>Q86X55-3</id>
        <name>3</name>
        <sequence type="displayed"/>
    </isoform>
    <isoform>
        <id>Q86X55-1</id>
        <name>1</name>
        <sequence type="described" ref="VSP_039876"/>
    </isoform>
    <isoform>
        <id>Q86X55-2</id>
        <name>2</name>
        <sequence type="described" ref="VSP_012506 VSP_012507"/>
    </isoform>
</comment>
<comment type="tissue specificity">
    <text evidence="5">Overexpressed in prostate adenocarcinomas and high-grade prostatic intraepithelial neoplasia.</text>
</comment>
<comment type="PTM">
    <text evidence="2">Auto-methylated on Arg-550. Methylation enhances transcription coactivator activity. Methylation is required for its role in the regulation of pre-mRNA alternative splicing (By similarity).</text>
</comment>
<comment type="PTM">
    <text evidence="2 11">Phosphorylation at Ser-216 is strongly increased during mitosis, and decreases rapidly to a very low, basal level after entry into the G1 phase of the cell cycle (PubMed:19843527). Phosphorylation at Ser-216 may promote location in the cytosol. Phosphorylation at Ser-216 interferes with S-adenosyl-L-methionine binding and strongly reduces methyltransferase activity (By similarity).</text>
</comment>
<comment type="PTM">
    <text evidence="13">Ubiquitinated by E3 ubiquitin-protein ligase complex containing FBXO9 at Lys-227; leading to proteasomal degradation.</text>
</comment>
<comment type="similarity">
    <text evidence="3">Belongs to the class I-like SAM-binding methyltransferase superfamily. Protein arginine N-methyltransferase family.</text>
</comment>
<feature type="initiator methionine" description="Removed" evidence="17 18">
    <location>
        <position position="1"/>
    </location>
</feature>
<feature type="chain" id="PRO_0000212338" description="Histone-arginine methyltransferase CARM1">
    <location>
        <begin position="2"/>
        <end position="608"/>
    </location>
</feature>
<feature type="domain" description="SAM-dependent MTase PRMT-type" evidence="3">
    <location>
        <begin position="146"/>
        <end position="453"/>
    </location>
</feature>
<feature type="region of interest" description="Interaction with C9orf72" evidence="2">
    <location>
        <begin position="27"/>
        <end position="138"/>
    </location>
</feature>
<feature type="region of interest" description="Required for nuclear translocation" evidence="2">
    <location>
        <begin position="346"/>
        <end position="379"/>
    </location>
</feature>
<feature type="region of interest" description="Transactivation domain" evidence="2">
    <location>
        <begin position="499"/>
        <end position="608"/>
    </location>
</feature>
<feature type="binding site" evidence="16">
    <location>
        <position position="159"/>
    </location>
    <ligand>
        <name>S-adenosyl-L-methionine</name>
        <dbReference type="ChEBI" id="CHEBI:59789"/>
    </ligand>
</feature>
<feature type="binding site" evidence="16">
    <location>
        <position position="168"/>
    </location>
    <ligand>
        <name>S-adenosyl-L-methionine</name>
        <dbReference type="ChEBI" id="CHEBI:59789"/>
    </ligand>
</feature>
<feature type="binding site" evidence="16">
    <location>
        <position position="192"/>
    </location>
    <ligand>
        <name>S-adenosyl-L-methionine</name>
        <dbReference type="ChEBI" id="CHEBI:59789"/>
    </ligand>
</feature>
<feature type="binding site" evidence="16">
    <location>
        <position position="214"/>
    </location>
    <ligand>
        <name>S-adenosyl-L-methionine</name>
        <dbReference type="ChEBI" id="CHEBI:59789"/>
    </ligand>
</feature>
<feature type="binding site" evidence="16">
    <location>
        <position position="243"/>
    </location>
    <ligand>
        <name>S-adenosyl-L-methionine</name>
        <dbReference type="ChEBI" id="CHEBI:59789"/>
    </ligand>
</feature>
<feature type="binding site" evidence="16">
    <location>
        <position position="271"/>
    </location>
    <ligand>
        <name>S-adenosyl-L-methionine</name>
        <dbReference type="ChEBI" id="CHEBI:59789"/>
    </ligand>
</feature>
<feature type="modified residue" description="N-acetylalanine" evidence="17 18">
    <location>
        <position position="2"/>
    </location>
</feature>
<feature type="modified residue" description="Phosphoserine" evidence="11">
    <location>
        <position position="216"/>
    </location>
</feature>
<feature type="modified residue" description="Dimethylated arginine" evidence="2">
    <location>
        <position position="550"/>
    </location>
</feature>
<feature type="cross-link" description="Glycyl lysine isopeptide (Lys-Gly) (interchain with G-Cter in ubiquitin)" evidence="13">
    <location>
        <position position="227"/>
    </location>
</feature>
<feature type="splice variant" id="VSP_012506" description="In isoform 2." evidence="15">
    <original>RIEIPFKFHMLHSGLV</original>
    <variation>SACLASPAATALCLPG</variation>
    <location>
        <begin position="369"/>
        <end position="384"/>
    </location>
</feature>
<feature type="splice variant" id="VSP_012507" description="In isoform 2." evidence="15">
    <location>
        <begin position="385"/>
        <end position="608"/>
    </location>
</feature>
<feature type="splice variant" id="VSP_039876" description="In isoform 1." evidence="14">
    <location>
        <begin position="539"/>
        <end position="561"/>
    </location>
</feature>
<feature type="mutagenesis site" description="Loss of protein methyltransferase activity without affecting ability to regulate replication fork progression." evidence="10">
    <original>R</original>
    <variation>A</variation>
    <location>
        <position position="168"/>
    </location>
</feature>
<feature type="mutagenesis site" description="Loss of FBXO9-mediated ubiquitination and subsequent proteasomal degradation." evidence="13">
    <original>K</original>
    <variation>A</variation>
    <location>
        <position position="227"/>
    </location>
</feature>
<feature type="helix" evidence="19">
    <location>
        <begin position="136"/>
        <end position="140"/>
    </location>
</feature>
<feature type="helix" evidence="20">
    <location>
        <begin position="145"/>
        <end position="153"/>
    </location>
</feature>
<feature type="helix" evidence="20">
    <location>
        <begin position="156"/>
        <end position="163"/>
    </location>
</feature>
<feature type="helix" evidence="20">
    <location>
        <begin position="166"/>
        <end position="178"/>
    </location>
</feature>
<feature type="helix" evidence="20">
    <location>
        <begin position="180"/>
        <end position="182"/>
    </location>
</feature>
<feature type="turn" evidence="20">
    <location>
        <begin position="183"/>
        <end position="185"/>
    </location>
</feature>
<feature type="strand" evidence="20">
    <location>
        <begin position="187"/>
        <end position="192"/>
    </location>
</feature>
<feature type="helix" evidence="20">
    <location>
        <begin position="197"/>
        <end position="204"/>
    </location>
</feature>
<feature type="strand" evidence="20">
    <location>
        <begin position="208"/>
        <end position="214"/>
    </location>
</feature>
<feature type="helix" evidence="20">
    <location>
        <begin position="218"/>
        <end position="228"/>
    </location>
</feature>
<feature type="turn" evidence="20">
    <location>
        <begin position="232"/>
        <end position="234"/>
    </location>
</feature>
<feature type="strand" evidence="20">
    <location>
        <begin position="235"/>
        <end position="240"/>
    </location>
</feature>
<feature type="turn" evidence="20">
    <location>
        <begin position="242"/>
        <end position="244"/>
    </location>
</feature>
<feature type="strand" evidence="20">
    <location>
        <begin position="251"/>
        <end position="256"/>
    </location>
</feature>
<feature type="turn" evidence="20">
    <location>
        <begin position="264"/>
        <end position="266"/>
    </location>
</feature>
<feature type="helix" evidence="20">
    <location>
        <begin position="268"/>
        <end position="274"/>
    </location>
</feature>
<feature type="helix" evidence="20">
    <location>
        <begin position="275"/>
        <end position="278"/>
    </location>
</feature>
<feature type="strand" evidence="20">
    <location>
        <begin position="279"/>
        <end position="287"/>
    </location>
</feature>
<feature type="strand" evidence="20">
    <location>
        <begin position="289"/>
        <end position="297"/>
    </location>
</feature>
<feature type="helix" evidence="20">
    <location>
        <begin position="300"/>
        <end position="308"/>
    </location>
</feature>
<feature type="helix" evidence="20">
    <location>
        <begin position="309"/>
        <end position="314"/>
    </location>
</feature>
<feature type="helix" evidence="20">
    <location>
        <begin position="324"/>
        <end position="326"/>
    </location>
</feature>
<feature type="helix" evidence="20">
    <location>
        <begin position="327"/>
        <end position="335"/>
    </location>
</feature>
<feature type="strand" evidence="20">
    <location>
        <begin position="339"/>
        <end position="341"/>
    </location>
</feature>
<feature type="helix" evidence="20">
    <location>
        <begin position="345"/>
        <end position="347"/>
    </location>
</feature>
<feature type="strand" evidence="20">
    <location>
        <begin position="353"/>
        <end position="358"/>
    </location>
</feature>
<feature type="turn" evidence="20">
    <location>
        <begin position="359"/>
        <end position="361"/>
    </location>
</feature>
<feature type="helix" evidence="20">
    <location>
        <begin position="364"/>
        <end position="368"/>
    </location>
</feature>
<feature type="strand" evidence="20">
    <location>
        <begin position="369"/>
        <end position="377"/>
    </location>
</feature>
<feature type="strand" evidence="20">
    <location>
        <begin position="382"/>
        <end position="396"/>
    </location>
</feature>
<feature type="strand" evidence="20">
    <location>
        <begin position="401"/>
        <end position="405"/>
    </location>
</feature>
<feature type="strand" evidence="20">
    <location>
        <begin position="417"/>
        <end position="428"/>
    </location>
</feature>
<feature type="strand" evidence="20">
    <location>
        <begin position="433"/>
        <end position="442"/>
    </location>
</feature>
<feature type="strand" evidence="20">
    <location>
        <begin position="446"/>
        <end position="456"/>
    </location>
</feature>
<feature type="turn" evidence="20">
    <location>
        <begin position="457"/>
        <end position="459"/>
    </location>
</feature>
<feature type="strand" evidence="20">
    <location>
        <begin position="462"/>
        <end position="468"/>
    </location>
</feature>
<organism>
    <name type="scientific">Homo sapiens</name>
    <name type="common">Human</name>
    <dbReference type="NCBI Taxonomy" id="9606"/>
    <lineage>
        <taxon>Eukaryota</taxon>
        <taxon>Metazoa</taxon>
        <taxon>Chordata</taxon>
        <taxon>Craniata</taxon>
        <taxon>Vertebrata</taxon>
        <taxon>Euteleostomi</taxon>
        <taxon>Mammalia</taxon>
        <taxon>Eutheria</taxon>
        <taxon>Euarchontoglires</taxon>
        <taxon>Primates</taxon>
        <taxon>Haplorrhini</taxon>
        <taxon>Catarrhini</taxon>
        <taxon>Hominidae</taxon>
        <taxon>Homo</taxon>
    </lineage>
</organism>
<gene>
    <name type="primary">CARM1</name>
    <name type="synonym">PRMT4</name>
</gene>
<dbReference type="EC" id="2.1.1.319" evidence="10"/>
<dbReference type="EMBL" id="AC007565">
    <property type="status" value="NOT_ANNOTATED_CDS"/>
    <property type="molecule type" value="Genomic_DNA"/>
</dbReference>
<dbReference type="EMBL" id="AC011442">
    <property type="status" value="NOT_ANNOTATED_CDS"/>
    <property type="molecule type" value="Genomic_DNA"/>
</dbReference>
<dbReference type="EMBL" id="CH471106">
    <property type="protein sequence ID" value="EAW84156.1"/>
    <property type="molecule type" value="Genomic_DNA"/>
</dbReference>
<dbReference type="EMBL" id="BC046240">
    <property type="protein sequence ID" value="AAH46240.1"/>
    <property type="molecule type" value="mRNA"/>
</dbReference>
<dbReference type="EMBL" id="BC172490">
    <property type="status" value="NOT_ANNOTATED_CDS"/>
    <property type="molecule type" value="mRNA"/>
</dbReference>
<dbReference type="EMBL" id="AL833242">
    <property type="status" value="NOT_ANNOTATED_CDS"/>
    <property type="molecule type" value="mRNA"/>
</dbReference>
<dbReference type="CCDS" id="CCDS12250.1">
    <molecule id="Q86X55-3"/>
</dbReference>
<dbReference type="CCDS" id="CCDS92516.1">
    <molecule id="Q86X55-1"/>
</dbReference>
<dbReference type="RefSeq" id="NP_001357017.1">
    <molecule id="Q86X55-1"/>
    <property type="nucleotide sequence ID" value="NM_001370088.1"/>
</dbReference>
<dbReference type="RefSeq" id="NP_954592.1">
    <molecule id="Q86X55-3"/>
    <property type="nucleotide sequence ID" value="NM_199141.2"/>
</dbReference>
<dbReference type="RefSeq" id="XP_005259765.1">
    <property type="nucleotide sequence ID" value="XM_005259708.4"/>
</dbReference>
<dbReference type="PDB" id="2Y1W">
    <property type="method" value="X-ray"/>
    <property type="resolution" value="2.10 A"/>
    <property type="chains" value="A/B/C/D=135-482"/>
</dbReference>
<dbReference type="PDB" id="2Y1X">
    <property type="method" value="X-ray"/>
    <property type="resolution" value="2.40 A"/>
    <property type="chains" value="A/B/C/D=135-482"/>
</dbReference>
<dbReference type="PDB" id="4IKP">
    <property type="method" value="X-ray"/>
    <property type="resolution" value="2.00 A"/>
    <property type="chains" value="A/B/C/D=140-480"/>
</dbReference>
<dbReference type="PDB" id="5DWQ">
    <property type="method" value="X-ray"/>
    <property type="resolution" value="2.36 A"/>
    <property type="chains" value="A/B/C/D=134-479"/>
</dbReference>
<dbReference type="PDB" id="5DX0">
    <property type="method" value="X-ray"/>
    <property type="resolution" value="2.05 A"/>
    <property type="chains" value="A/B/C/D=134-479"/>
</dbReference>
<dbReference type="PDB" id="5DX1">
    <property type="method" value="X-ray"/>
    <property type="resolution" value="1.93 A"/>
    <property type="chains" value="A/B/C/D=134-479"/>
</dbReference>
<dbReference type="PDB" id="5DX8">
    <property type="method" value="X-ray"/>
    <property type="resolution" value="1.94 A"/>
    <property type="chains" value="A/B/C/D=134-479"/>
</dbReference>
<dbReference type="PDB" id="5DXA">
    <property type="method" value="X-ray"/>
    <property type="resolution" value="2.07 A"/>
    <property type="chains" value="A/B/C/D=134-479"/>
</dbReference>
<dbReference type="PDB" id="5DXJ">
    <property type="method" value="X-ray"/>
    <property type="resolution" value="1.95 A"/>
    <property type="chains" value="A/B/C/D=134-479"/>
</dbReference>
<dbReference type="PDB" id="5U4X">
    <property type="method" value="X-ray"/>
    <property type="resolution" value="1.88 A"/>
    <property type="chains" value="A/B/C/D=140-480"/>
</dbReference>
<dbReference type="PDB" id="6ARJ">
    <property type="method" value="X-ray"/>
    <property type="resolution" value="1.92 A"/>
    <property type="chains" value="A/B/C/D=134-479"/>
</dbReference>
<dbReference type="PDB" id="6ARV">
    <property type="method" value="X-ray"/>
    <property type="resolution" value="2.00 A"/>
    <property type="chains" value="A/B/C/D=134-479"/>
</dbReference>
<dbReference type="PDB" id="6D2L">
    <property type="method" value="X-ray"/>
    <property type="resolution" value="2.00 A"/>
    <property type="chains" value="A/B/C/D/E/F=146-489"/>
</dbReference>
<dbReference type="PDB" id="6DVR">
    <property type="method" value="X-ray"/>
    <property type="resolution" value="1.54 A"/>
    <property type="chains" value="A/B=146-489"/>
</dbReference>
<dbReference type="PDB" id="6IZQ">
    <property type="method" value="X-ray"/>
    <property type="resolution" value="2.45 A"/>
    <property type="chains" value="A/B/C/D=145-477"/>
</dbReference>
<dbReference type="PDB" id="6S70">
    <property type="method" value="X-ray"/>
    <property type="resolution" value="2.30 A"/>
    <property type="chains" value="A/B/C/D=135-479"/>
</dbReference>
<dbReference type="PDB" id="6S71">
    <property type="method" value="X-ray"/>
    <property type="resolution" value="2.06 A"/>
    <property type="chains" value="A/B/C/D=135-479"/>
</dbReference>
<dbReference type="PDB" id="6S74">
    <property type="method" value="X-ray"/>
    <property type="resolution" value="2.10 A"/>
    <property type="chains" value="A/B/C/D=135-479"/>
</dbReference>
<dbReference type="PDB" id="6S77">
    <property type="method" value="X-ray"/>
    <property type="resolution" value="2.12 A"/>
    <property type="chains" value="A/B/C/D=135-479"/>
</dbReference>
<dbReference type="PDB" id="6S79">
    <property type="method" value="X-ray"/>
    <property type="resolution" value="2.10 A"/>
    <property type="chains" value="A/B/C/D=135-479"/>
</dbReference>
<dbReference type="PDB" id="6S7A">
    <property type="method" value="X-ray"/>
    <property type="resolution" value="1.86 A"/>
    <property type="chains" value="A/B/C/D=135-479"/>
</dbReference>
<dbReference type="PDB" id="6S7B">
    <property type="method" value="X-ray"/>
    <property type="resolution" value="2.66 A"/>
    <property type="chains" value="A/B/C/D=135-479"/>
</dbReference>
<dbReference type="PDB" id="6S7C">
    <property type="method" value="X-ray"/>
    <property type="resolution" value="2.30 A"/>
    <property type="chains" value="A/B/C/D=135-479"/>
</dbReference>
<dbReference type="PDB" id="7FAI">
    <property type="method" value="X-ray"/>
    <property type="resolution" value="2.10 A"/>
    <property type="chains" value="A/B/C/D=142-477"/>
</dbReference>
<dbReference type="PDB" id="7FAJ">
    <property type="method" value="X-ray"/>
    <property type="resolution" value="2.25 A"/>
    <property type="chains" value="A/B/C/D=142-477"/>
</dbReference>
<dbReference type="PDB" id="7U9I">
    <property type="method" value="X-ray"/>
    <property type="resolution" value="2.00 A"/>
    <property type="chains" value="A/B=146-489"/>
</dbReference>
<dbReference type="PDB" id="8G2H">
    <property type="method" value="X-ray"/>
    <property type="resolution" value="1.49 A"/>
    <property type="chains" value="A=140-480"/>
</dbReference>
<dbReference type="PDB" id="8G2I">
    <property type="method" value="X-ray"/>
    <property type="resolution" value="2.17 A"/>
    <property type="chains" value="A=140-480"/>
</dbReference>
<dbReference type="PDB" id="8SIG">
    <property type="method" value="X-ray"/>
    <property type="resolution" value="1.78 A"/>
    <property type="chains" value="A=140-480"/>
</dbReference>
<dbReference type="PDB" id="8SIH">
    <property type="method" value="X-ray"/>
    <property type="resolution" value="2.35 A"/>
    <property type="chains" value="A=140-480"/>
</dbReference>
<dbReference type="PDBsum" id="2Y1W"/>
<dbReference type="PDBsum" id="2Y1X"/>
<dbReference type="PDBsum" id="4IKP"/>
<dbReference type="PDBsum" id="5DWQ"/>
<dbReference type="PDBsum" id="5DX0"/>
<dbReference type="PDBsum" id="5DX1"/>
<dbReference type="PDBsum" id="5DX8"/>
<dbReference type="PDBsum" id="5DXA"/>
<dbReference type="PDBsum" id="5DXJ"/>
<dbReference type="PDBsum" id="5U4X"/>
<dbReference type="PDBsum" id="6ARJ"/>
<dbReference type="PDBsum" id="6ARV"/>
<dbReference type="PDBsum" id="6D2L"/>
<dbReference type="PDBsum" id="6DVR"/>
<dbReference type="PDBsum" id="6IZQ"/>
<dbReference type="PDBsum" id="6S70"/>
<dbReference type="PDBsum" id="6S71"/>
<dbReference type="PDBsum" id="6S74"/>
<dbReference type="PDBsum" id="6S77"/>
<dbReference type="PDBsum" id="6S79"/>
<dbReference type="PDBsum" id="6S7A"/>
<dbReference type="PDBsum" id="6S7B"/>
<dbReference type="PDBsum" id="6S7C"/>
<dbReference type="PDBsum" id="7FAI"/>
<dbReference type="PDBsum" id="7FAJ"/>
<dbReference type="PDBsum" id="7U9I"/>
<dbReference type="PDBsum" id="8G2H"/>
<dbReference type="PDBsum" id="8G2I"/>
<dbReference type="PDBsum" id="8SIG"/>
<dbReference type="PDBsum" id="8SIH"/>
<dbReference type="SMR" id="Q86X55"/>
<dbReference type="BioGRID" id="115760">
    <property type="interactions" value="351"/>
</dbReference>
<dbReference type="CORUM" id="Q86X55"/>
<dbReference type="DIP" id="DIP-44071N"/>
<dbReference type="FunCoup" id="Q86X55">
    <property type="interactions" value="4032"/>
</dbReference>
<dbReference type="IntAct" id="Q86X55">
    <property type="interactions" value="116"/>
</dbReference>
<dbReference type="MINT" id="Q86X55"/>
<dbReference type="STRING" id="9606.ENSP00000325690"/>
<dbReference type="BindingDB" id="Q86X55"/>
<dbReference type="ChEMBL" id="CHEMBL5406"/>
<dbReference type="GuidetoPHARMACOLOGY" id="1255"/>
<dbReference type="GlyGen" id="Q86X55">
    <property type="glycosylation" value="5 sites, 1 O-linked glycan (1 site)"/>
</dbReference>
<dbReference type="iPTMnet" id="Q86X55"/>
<dbReference type="PhosphoSitePlus" id="Q86X55"/>
<dbReference type="SwissPalm" id="Q86X55"/>
<dbReference type="BioMuta" id="CARM1"/>
<dbReference type="DMDM" id="308153622"/>
<dbReference type="jPOST" id="Q86X55"/>
<dbReference type="MassIVE" id="Q86X55"/>
<dbReference type="PaxDb" id="9606-ENSP00000325690"/>
<dbReference type="PeptideAtlas" id="Q86X55"/>
<dbReference type="ProteomicsDB" id="70241">
    <molecule id="Q86X55-3"/>
</dbReference>
<dbReference type="ProteomicsDB" id="70242">
    <molecule id="Q86X55-1"/>
</dbReference>
<dbReference type="ProteomicsDB" id="70243">
    <molecule id="Q86X55-2"/>
</dbReference>
<dbReference type="Pumba" id="Q86X55"/>
<dbReference type="Antibodypedia" id="25589">
    <property type="antibodies" value="644 antibodies from 40 providers"/>
</dbReference>
<dbReference type="DNASU" id="10498"/>
<dbReference type="Ensembl" id="ENST00000327064.9">
    <molecule id="Q86X55-3"/>
    <property type="protein sequence ID" value="ENSP00000325690.4"/>
    <property type="gene ID" value="ENSG00000142453.13"/>
</dbReference>
<dbReference type="Ensembl" id="ENST00000344150.8">
    <molecule id="Q86X55-1"/>
    <property type="protein sequence ID" value="ENSP00000340934.3"/>
    <property type="gene ID" value="ENSG00000142453.13"/>
</dbReference>
<dbReference type="GeneID" id="10498"/>
<dbReference type="KEGG" id="hsa:10498"/>
<dbReference type="MANE-Select" id="ENST00000327064.9">
    <property type="protein sequence ID" value="ENSP00000325690.4"/>
    <property type="RefSeq nucleotide sequence ID" value="NM_199141.2"/>
    <property type="RefSeq protein sequence ID" value="NP_954592.1"/>
</dbReference>
<dbReference type="UCSC" id="uc002mpz.4">
    <molecule id="Q86X55-3"/>
    <property type="organism name" value="human"/>
</dbReference>
<dbReference type="AGR" id="HGNC:23393"/>
<dbReference type="CTD" id="10498"/>
<dbReference type="DisGeNET" id="10498"/>
<dbReference type="GeneCards" id="CARM1"/>
<dbReference type="HGNC" id="HGNC:23393">
    <property type="gene designation" value="CARM1"/>
</dbReference>
<dbReference type="HPA" id="ENSG00000142453">
    <property type="expression patterns" value="Tissue enhanced (skeletal)"/>
</dbReference>
<dbReference type="MalaCards" id="CARM1"/>
<dbReference type="MIM" id="603934">
    <property type="type" value="gene"/>
</dbReference>
<dbReference type="neXtProt" id="NX_Q86X55"/>
<dbReference type="OpenTargets" id="ENSG00000142453"/>
<dbReference type="PharmGKB" id="PA134959553"/>
<dbReference type="VEuPathDB" id="HostDB:ENSG00000142453"/>
<dbReference type="eggNOG" id="KOG1500">
    <property type="taxonomic scope" value="Eukaryota"/>
</dbReference>
<dbReference type="GeneTree" id="ENSGT00940000160377"/>
<dbReference type="HOGENOM" id="CLU_017375_0_1_1"/>
<dbReference type="InParanoid" id="Q86X55"/>
<dbReference type="OMA" id="ASNMAHH"/>
<dbReference type="OrthoDB" id="7848332at2759"/>
<dbReference type="PAN-GO" id="Q86X55">
    <property type="GO annotations" value="0 GO annotations based on evolutionary models"/>
</dbReference>
<dbReference type="PhylomeDB" id="Q86X55"/>
<dbReference type="TreeFam" id="TF323332"/>
<dbReference type="BioCyc" id="MetaCyc:HS13925-MONOMER"/>
<dbReference type="BRENDA" id="2.1.1.319">
    <property type="organism ID" value="2681"/>
</dbReference>
<dbReference type="PathwayCommons" id="Q86X55"/>
<dbReference type="Reactome" id="R-HSA-1368082">
    <property type="pathway name" value="RORA activates gene expression"/>
</dbReference>
<dbReference type="Reactome" id="R-HSA-1368108">
    <property type="pathway name" value="BMAL1:CLOCK,NPAS2 activates circadian gene expression"/>
</dbReference>
<dbReference type="Reactome" id="R-HSA-1989781">
    <property type="pathway name" value="PPARA activates gene expression"/>
</dbReference>
<dbReference type="Reactome" id="R-HSA-2151201">
    <property type="pathway name" value="Transcriptional activation of mitochondrial biogenesis"/>
</dbReference>
<dbReference type="Reactome" id="R-HSA-2426168">
    <property type="pathway name" value="Activation of gene expression by SREBF (SREBP)"/>
</dbReference>
<dbReference type="Reactome" id="R-HSA-3214858">
    <property type="pathway name" value="RMTs methylate histone arginines"/>
</dbReference>
<dbReference type="Reactome" id="R-HSA-381340">
    <property type="pathway name" value="Transcriptional regulation of white adipocyte differentiation"/>
</dbReference>
<dbReference type="Reactome" id="R-HSA-400206">
    <property type="pathway name" value="Regulation of lipid metabolism by PPARalpha"/>
</dbReference>
<dbReference type="Reactome" id="R-HSA-400253">
    <property type="pathway name" value="Circadian Clock"/>
</dbReference>
<dbReference type="Reactome" id="R-HSA-6804114">
    <property type="pathway name" value="TP53 Regulates Transcription of Genes Involved in G2 Cell Cycle Arrest"/>
</dbReference>
<dbReference type="Reactome" id="R-HSA-9018519">
    <property type="pathway name" value="Estrogen-dependent gene expression"/>
</dbReference>
<dbReference type="Reactome" id="R-HSA-9707564">
    <property type="pathway name" value="Cytoprotection by HMOX1"/>
</dbReference>
<dbReference type="Reactome" id="R-HSA-9707616">
    <property type="pathway name" value="Heme signaling"/>
</dbReference>
<dbReference type="SignaLink" id="Q86X55"/>
<dbReference type="SIGNOR" id="Q86X55"/>
<dbReference type="BioGRID-ORCS" id="10498">
    <property type="hits" value="166 hits in 1191 CRISPR screens"/>
</dbReference>
<dbReference type="CD-CODE" id="804901D1">
    <property type="entry name" value="Nuclear speckle"/>
</dbReference>
<dbReference type="CD-CODE" id="DEE660B4">
    <property type="entry name" value="Stress granule"/>
</dbReference>
<dbReference type="ChiTaRS" id="CARM1">
    <property type="organism name" value="human"/>
</dbReference>
<dbReference type="EvolutionaryTrace" id="Q86X55"/>
<dbReference type="GenomeRNAi" id="10498"/>
<dbReference type="Pharos" id="Q86X55">
    <property type="development level" value="Tchem"/>
</dbReference>
<dbReference type="PRO" id="PR:Q86X55"/>
<dbReference type="Proteomes" id="UP000005640">
    <property type="component" value="Chromosome 19"/>
</dbReference>
<dbReference type="RNAct" id="Q86X55">
    <property type="molecule type" value="protein"/>
</dbReference>
<dbReference type="Bgee" id="ENSG00000142453">
    <property type="expression patterns" value="Expressed in hindlimb stylopod muscle and 193 other cell types or tissues"/>
</dbReference>
<dbReference type="ExpressionAtlas" id="Q86X55">
    <property type="expression patterns" value="baseline and differential"/>
</dbReference>
<dbReference type="GO" id="GO:0005737">
    <property type="term" value="C:cytoplasm"/>
    <property type="evidence" value="ECO:0000314"/>
    <property type="project" value="UniProtKB"/>
</dbReference>
<dbReference type="GO" id="GO:0005829">
    <property type="term" value="C:cytosol"/>
    <property type="evidence" value="ECO:0000314"/>
    <property type="project" value="HPA"/>
</dbReference>
<dbReference type="GO" id="GO:0043596">
    <property type="term" value="C:nuclear replication fork"/>
    <property type="evidence" value="ECO:0000314"/>
    <property type="project" value="UniProtKB"/>
</dbReference>
<dbReference type="GO" id="GO:0005654">
    <property type="term" value="C:nucleoplasm"/>
    <property type="evidence" value="ECO:0000314"/>
    <property type="project" value="HPA"/>
</dbReference>
<dbReference type="GO" id="GO:0005634">
    <property type="term" value="C:nucleus"/>
    <property type="evidence" value="ECO:0000314"/>
    <property type="project" value="UniProtKB"/>
</dbReference>
<dbReference type="GO" id="GO:0008013">
    <property type="term" value="F:beta-catenin binding"/>
    <property type="evidence" value="ECO:0000304"/>
    <property type="project" value="AgBase"/>
</dbReference>
<dbReference type="GO" id="GO:0140297">
    <property type="term" value="F:DNA-binding transcription factor binding"/>
    <property type="evidence" value="ECO:0000353"/>
    <property type="project" value="GO_Central"/>
</dbReference>
<dbReference type="GO" id="GO:0008469">
    <property type="term" value="F:histone arginine N-methyltransferase activity"/>
    <property type="evidence" value="ECO:0000314"/>
    <property type="project" value="CACAO"/>
</dbReference>
<dbReference type="GO" id="GO:0035642">
    <property type="term" value="F:histone H3R17 methyltransferase activity"/>
    <property type="evidence" value="ECO:0000314"/>
    <property type="project" value="GO_Central"/>
</dbReference>
<dbReference type="GO" id="GO:0070611">
    <property type="term" value="F:histone H3R2 methyltransferase activity"/>
    <property type="evidence" value="ECO:0000315"/>
    <property type="project" value="UniProtKB"/>
</dbReference>
<dbReference type="GO" id="GO:0042054">
    <property type="term" value="F:histone methyltransferase activity"/>
    <property type="evidence" value="ECO:0000314"/>
    <property type="project" value="UniProtKB"/>
</dbReference>
<dbReference type="GO" id="GO:0008276">
    <property type="term" value="F:protein methyltransferase activity"/>
    <property type="evidence" value="ECO:0000314"/>
    <property type="project" value="UniProt"/>
</dbReference>
<dbReference type="GO" id="GO:0016274">
    <property type="term" value="F:protein-arginine N-methyltransferase activity"/>
    <property type="evidence" value="ECO:0000314"/>
    <property type="project" value="MGI"/>
</dbReference>
<dbReference type="GO" id="GO:0035242">
    <property type="term" value="F:protein-arginine omega-N asymmetric methyltransferase activity"/>
    <property type="evidence" value="ECO:0000250"/>
    <property type="project" value="UniProtKB"/>
</dbReference>
<dbReference type="GO" id="GO:0000976">
    <property type="term" value="F:transcription cis-regulatory region binding"/>
    <property type="evidence" value="ECO:0000250"/>
    <property type="project" value="UniProtKB"/>
</dbReference>
<dbReference type="GO" id="GO:0003713">
    <property type="term" value="F:transcription coactivator activity"/>
    <property type="evidence" value="ECO:0000314"/>
    <property type="project" value="GO_Central"/>
</dbReference>
<dbReference type="GO" id="GO:0006338">
    <property type="term" value="P:chromatin remodeling"/>
    <property type="evidence" value="ECO:0000318"/>
    <property type="project" value="GO_Central"/>
</dbReference>
<dbReference type="GO" id="GO:0032259">
    <property type="term" value="P:methylation"/>
    <property type="evidence" value="ECO:0007669"/>
    <property type="project" value="UniProtKB-KW"/>
</dbReference>
<dbReference type="GO" id="GO:2000171">
    <property type="term" value="P:negative regulation of dendrite development"/>
    <property type="evidence" value="ECO:0007669"/>
    <property type="project" value="Ensembl"/>
</dbReference>
<dbReference type="GO" id="GO:0008284">
    <property type="term" value="P:positive regulation of cell population proliferation"/>
    <property type="evidence" value="ECO:0007669"/>
    <property type="project" value="Ensembl"/>
</dbReference>
<dbReference type="GO" id="GO:1904037">
    <property type="term" value="P:positive regulation of epithelial cell apoptotic process"/>
    <property type="evidence" value="ECO:0000314"/>
    <property type="project" value="UniProt"/>
</dbReference>
<dbReference type="GO" id="GO:0045600">
    <property type="term" value="P:positive regulation of fat cell differentiation"/>
    <property type="evidence" value="ECO:0000250"/>
    <property type="project" value="UniProtKB"/>
</dbReference>
<dbReference type="GO" id="GO:0045943">
    <property type="term" value="P:positive regulation of transcription by RNA polymerase I"/>
    <property type="evidence" value="ECO:0000314"/>
    <property type="project" value="GO_Central"/>
</dbReference>
<dbReference type="GO" id="GO:0006355">
    <property type="term" value="P:regulation of DNA-templated transcription"/>
    <property type="evidence" value="ECO:0000250"/>
    <property type="project" value="UniProtKB"/>
</dbReference>
<dbReference type="GO" id="GO:0033146">
    <property type="term" value="P:regulation of intracellular estrogen receptor signaling pathway"/>
    <property type="evidence" value="ECO:0000250"/>
    <property type="project" value="UniProtKB"/>
</dbReference>
<dbReference type="GO" id="GO:0071932">
    <property type="term" value="P:replication fork reversal"/>
    <property type="evidence" value="ECO:0000314"/>
    <property type="project" value="UniProtKB"/>
</dbReference>
<dbReference type="GO" id="GO:0051591">
    <property type="term" value="P:response to cAMP"/>
    <property type="evidence" value="ECO:0007669"/>
    <property type="project" value="Ensembl"/>
</dbReference>
<dbReference type="CDD" id="cd02440">
    <property type="entry name" value="AdoMet_MTases"/>
    <property type="match status" value="1"/>
</dbReference>
<dbReference type="CDD" id="cd13330">
    <property type="entry name" value="PH_CARM1"/>
    <property type="match status" value="1"/>
</dbReference>
<dbReference type="FunFam" id="2.30.29.30:FF:000235">
    <property type="entry name" value="Coactivator-associated arginine methyltransferase 1"/>
    <property type="match status" value="1"/>
</dbReference>
<dbReference type="FunFam" id="2.70.160.11:FF:000002">
    <property type="entry name" value="Probable histone-arginine methyltransferase CARM1"/>
    <property type="match status" value="1"/>
</dbReference>
<dbReference type="FunFam" id="3.40.50.150:FF:000031">
    <property type="entry name" value="Putative Histone-arginine methyltransferase CARM1"/>
    <property type="match status" value="1"/>
</dbReference>
<dbReference type="Gene3D" id="2.70.160.11">
    <property type="entry name" value="Hnrnp arginine n-methyltransferase1"/>
    <property type="match status" value="1"/>
</dbReference>
<dbReference type="Gene3D" id="2.30.29.30">
    <property type="entry name" value="Pleckstrin-homology domain (PH domain)/Phosphotyrosine-binding domain (PTB)"/>
    <property type="match status" value="1"/>
</dbReference>
<dbReference type="Gene3D" id="3.40.50.150">
    <property type="entry name" value="Vaccinia Virus protein VP39"/>
    <property type="match status" value="1"/>
</dbReference>
<dbReference type="InterPro" id="IPR025799">
    <property type="entry name" value="Arg_MeTrfase"/>
</dbReference>
<dbReference type="InterPro" id="IPR020989">
    <property type="entry name" value="Histone-Arg_MeTrfase_N"/>
</dbReference>
<dbReference type="InterPro" id="IPR011993">
    <property type="entry name" value="PH-like_dom_sf"/>
</dbReference>
<dbReference type="InterPro" id="IPR055135">
    <property type="entry name" value="PRMT_dom"/>
</dbReference>
<dbReference type="InterPro" id="IPR029063">
    <property type="entry name" value="SAM-dependent_MTases_sf"/>
</dbReference>
<dbReference type="PANTHER" id="PTHR11006:SF51">
    <property type="entry name" value="HISTONE-ARGININE METHYLTRANSFERASE CARM1"/>
    <property type="match status" value="1"/>
</dbReference>
<dbReference type="PANTHER" id="PTHR11006">
    <property type="entry name" value="PROTEIN ARGININE N-METHYLTRANSFERASE"/>
    <property type="match status" value="1"/>
</dbReference>
<dbReference type="Pfam" id="PF11531">
    <property type="entry name" value="CARM1"/>
    <property type="match status" value="1"/>
</dbReference>
<dbReference type="Pfam" id="PF06325">
    <property type="entry name" value="PrmA"/>
    <property type="match status" value="1"/>
</dbReference>
<dbReference type="Pfam" id="PF22528">
    <property type="entry name" value="PRMT_C"/>
    <property type="match status" value="1"/>
</dbReference>
<dbReference type="SUPFAM" id="SSF53335">
    <property type="entry name" value="S-adenosyl-L-methionine-dependent methyltransferases"/>
    <property type="match status" value="1"/>
</dbReference>
<dbReference type="PROSITE" id="PS51678">
    <property type="entry name" value="SAM_MT_PRMT"/>
    <property type="match status" value="1"/>
</dbReference>
<proteinExistence type="evidence at protein level"/>
<accession>Q86X55</accession>
<accession>A6NN38</accession>
<evidence type="ECO:0000250" key="1">
    <source>
        <dbReference type="UniProtKB" id="Q4AE70"/>
    </source>
</evidence>
<evidence type="ECO:0000250" key="2">
    <source>
        <dbReference type="UniProtKB" id="Q9WVG6"/>
    </source>
</evidence>
<evidence type="ECO:0000255" key="3">
    <source>
        <dbReference type="PROSITE-ProRule" id="PRU01015"/>
    </source>
</evidence>
<evidence type="ECO:0000269" key="4">
    <source>
    </source>
</evidence>
<evidence type="ECO:0000269" key="5">
    <source>
    </source>
</evidence>
<evidence type="ECO:0000269" key="6">
    <source>
    </source>
</evidence>
<evidence type="ECO:0000269" key="7">
    <source>
    </source>
</evidence>
<evidence type="ECO:0000269" key="8">
    <source>
    </source>
</evidence>
<evidence type="ECO:0000269" key="9">
    <source>
    </source>
</evidence>
<evidence type="ECO:0000269" key="10">
    <source>
    </source>
</evidence>
<evidence type="ECO:0000269" key="11">
    <source>
    </source>
</evidence>
<evidence type="ECO:0000269" key="12">
    <source>
    </source>
</evidence>
<evidence type="ECO:0000269" key="13">
    <source>
    </source>
</evidence>
<evidence type="ECO:0000303" key="14">
    <source>
    </source>
</evidence>
<evidence type="ECO:0000303" key="15">
    <source>
    </source>
</evidence>
<evidence type="ECO:0000305" key="16">
    <source>
    </source>
</evidence>
<evidence type="ECO:0007744" key="17">
    <source>
    </source>
</evidence>
<evidence type="ECO:0007744" key="18">
    <source>
    </source>
</evidence>
<evidence type="ECO:0007829" key="19">
    <source>
        <dbReference type="PDB" id="6S7A"/>
    </source>
</evidence>
<evidence type="ECO:0007829" key="20">
    <source>
        <dbReference type="PDB" id="8G2H"/>
    </source>
</evidence>
<protein>
    <recommendedName>
        <fullName>Histone-arginine methyltransferase CARM1</fullName>
        <ecNumber evidence="10">2.1.1.319</ecNumber>
    </recommendedName>
    <alternativeName>
        <fullName>Coactivator-associated arginine methyltransferase 1</fullName>
    </alternativeName>
    <alternativeName>
        <fullName>Protein arginine N-methyltransferase 4</fullName>
    </alternativeName>
</protein>